<organismHost>
    <name type="scientific">Homo sapiens</name>
    <name type="common">Human</name>
    <dbReference type="NCBI Taxonomy" id="9606"/>
</organismHost>
<sequence>MAYGWWRRRRRRWRRWRRRPWRRRWRTRRRRPARRRGRRRNVRRRRRGGRWRRRYRRWKRKGRRRKKAKIIIRQWQPNYRRRCNIVGYIPVLICGENTVSRNYATHSDDTNYPGPLGGGMTTDKFTLRILYDEYKRFMNYWTASNEDLDLCRYLGVNMYFFRHPDVDFIIKINTMPPFLDTELTAPSIHPGMLALDKRARWIPSLKSRPGKKHYIKIRVGAPKMFTDKWYPQTDLCDMVLLTVYATAADMQYPFGSPLTDSVVVNFQVLQSMYDQNISILPDQKSEREKLLTQITDYIPFYNTTQTIAQLKPFIDAGNITPNTPATTWGSYINTTKFTTAATTTYTYPGTTTTTVTMLTCNDSWYRGTVYNDKIKNLPKQAATLYSKATKTLLGNTFTTDDHTLEYHGGLYSSIWLSPGRSYFETTGAYTDIKYNPFTDRGEGNMLWIDWLSKKNMNYDKVQSKCLISDLPLWAAAYGYVEFCAKSTGDQNIHMNARLLIRSPFTDPQLLVHTDPTKGFVPYSLNFGNGKMPGGSSNVPIRMRAKWYPTLFHQQEVLEALAQSGPFAYHSDIKKVSLGMKYRFKWIWGGNPVRQQVVRNPCKETHSSGNRVPRSLQIVDPKYNSPELTFHTWDFRRGLFGPKAIQRMQQQPTTTDIFSAGHKRPRRDTEVYHSSQEGEQKESLLFPPVKLLRRVPPWEDSQQEESGSQSSEEETQTVSQQLKQQLQQQRILGVKLRLLFNQVQKIQQNQDINPTLLPRGGDLASLFQIAP</sequence>
<evidence type="ECO:0000256" key="1">
    <source>
        <dbReference type="SAM" id="MobiDB-lite"/>
    </source>
</evidence>
<evidence type="ECO:0000305" key="2"/>
<reference key="1">
    <citation type="journal article" date="2000" name="J. Virol.">
        <title>Three spliced mRNAs of TT virus transcribed from a plasmid containing the entire genome in COS1 cells.</title>
        <authorList>
            <person name="Kamahora T."/>
            <person name="Hino S."/>
            <person name="Miyata H."/>
        </authorList>
    </citation>
    <scope>NUCLEOTIDE SEQUENCE [GENOMIC DNA / MRNA]</scope>
</reference>
<reference key="2">
    <citation type="journal article" date="2007" name="Rev. Med. Virol.">
        <title>Torque teno virus (TTV): current status.</title>
        <authorList>
            <person name="Hino S."/>
            <person name="Miyata H."/>
        </authorList>
    </citation>
    <scope>REVIEW</scope>
</reference>
<gene>
    <name type="ORF">ORF1</name>
</gene>
<protein>
    <recommendedName>
        <fullName>Probable capsid and replication-associated protein</fullName>
    </recommendedName>
</protein>
<feature type="chain" id="PRO_0000315326" description="Probable capsid and replication-associated protein">
    <location>
        <begin position="1"/>
        <end position="770"/>
    </location>
</feature>
<feature type="region of interest" description="Disordered" evidence="1">
    <location>
        <begin position="647"/>
        <end position="682"/>
    </location>
</feature>
<feature type="region of interest" description="Disordered" evidence="1">
    <location>
        <begin position="697"/>
        <end position="717"/>
    </location>
</feature>
<feature type="compositionally biased region" description="Polar residues" evidence="1">
    <location>
        <begin position="647"/>
        <end position="656"/>
    </location>
</feature>
<feature type="compositionally biased region" description="Basic and acidic residues" evidence="1">
    <location>
        <begin position="666"/>
        <end position="681"/>
    </location>
</feature>
<feature type="compositionally biased region" description="Low complexity" evidence="1">
    <location>
        <begin position="703"/>
        <end position="717"/>
    </location>
</feature>
<dbReference type="EMBL" id="AB041007">
    <property type="protein sequence ID" value="BAB15944.1"/>
    <property type="molecule type" value="Genomic_DNA"/>
</dbReference>
<dbReference type="EMBL" id="AB041821">
    <property type="protein sequence ID" value="BAB15948.1"/>
    <property type="molecule type" value="mRNA"/>
</dbReference>
<dbReference type="RefSeq" id="NP_817122.1">
    <property type="nucleotide sequence ID" value="NC_002076.2"/>
</dbReference>
<dbReference type="SMR" id="Q9DHA8"/>
<dbReference type="GeneID" id="1449575"/>
<dbReference type="KEGG" id="vg:1449575"/>
<dbReference type="Proteomes" id="UP000001448">
    <property type="component" value="Segment"/>
</dbReference>
<dbReference type="GO" id="GO:0039615">
    <property type="term" value="C:T=1 icosahedral viral capsid"/>
    <property type="evidence" value="ECO:0007669"/>
    <property type="project" value="UniProtKB-KW"/>
</dbReference>
<dbReference type="GO" id="GO:0006260">
    <property type="term" value="P:DNA replication"/>
    <property type="evidence" value="ECO:0007669"/>
    <property type="project" value="UniProtKB-KW"/>
</dbReference>
<dbReference type="InterPro" id="IPR004219">
    <property type="entry name" value="TTvirus_Unk"/>
</dbReference>
<dbReference type="Pfam" id="PF02956">
    <property type="entry name" value="TT_ORF1"/>
    <property type="match status" value="1"/>
</dbReference>
<name>CAPSD_TTVV1</name>
<organism>
    <name type="scientific">Torque teno virus (strain VT416)</name>
    <name type="common">TTV</name>
    <dbReference type="NCBI Taxonomy" id="486280"/>
    <lineage>
        <taxon>Viruses</taxon>
        <taxon>Viruses incertae sedis</taxon>
        <taxon>Anelloviridae</taxon>
        <taxon>Torque teno virus</taxon>
    </lineage>
</organism>
<comment type="function">
    <text>May self assemble to form an icosahedral capsid. Presumably essential to initiate and monitor viral genome replication by a rolling circle mechanism.</text>
</comment>
<comment type="subcellular location">
    <subcellularLocation>
        <location evidence="2">Virion</location>
    </subcellularLocation>
</comment>
<comment type="similarity">
    <text evidence="2">Belongs to the anelloviridae capsid protein family.</text>
</comment>
<accession>Q9DHA8</accession>
<keyword id="KW-0167">Capsid protein</keyword>
<keyword id="KW-0235">DNA replication</keyword>
<keyword id="KW-1140">T=1 icosahedral capsid protein</keyword>
<keyword id="KW-0946">Virion</keyword>
<proteinExistence type="evidence at transcript level"/>